<dbReference type="Proteomes" id="UP000286640">
    <property type="component" value="Unplaced"/>
</dbReference>
<feature type="chain" id="PRO_0000312654" description="Autoantigenic sperm protein 4">
    <location>
        <begin position="1"/>
        <end position="15" status="greater than"/>
    </location>
</feature>
<feature type="non-terminal residue" evidence="3">
    <location>
        <position position="15"/>
    </location>
</feature>
<sequence>XXYQTDELARVLSPT</sequence>
<organism>
    <name type="scientific">Vulpes vulpes</name>
    <name type="common">Red fox</name>
    <dbReference type="NCBI Taxonomy" id="9627"/>
    <lineage>
        <taxon>Eukaryota</taxon>
        <taxon>Metazoa</taxon>
        <taxon>Chordata</taxon>
        <taxon>Craniata</taxon>
        <taxon>Vertebrata</taxon>
        <taxon>Euteleostomi</taxon>
        <taxon>Mammalia</taxon>
        <taxon>Eutheria</taxon>
        <taxon>Laurasiatheria</taxon>
        <taxon>Carnivora</taxon>
        <taxon>Caniformia</taxon>
        <taxon>Canidae</taxon>
        <taxon>Vulpes</taxon>
    </lineage>
</organism>
<evidence type="ECO:0000269" key="1">
    <source>
    </source>
</evidence>
<evidence type="ECO:0000269" key="2">
    <source ref="1"/>
</evidence>
<evidence type="ECO:0000303" key="3">
    <source ref="1"/>
</evidence>
<evidence type="ECO:0000305" key="4"/>
<proteinExistence type="evidence at protein level"/>
<protein>
    <recommendedName>
        <fullName>Autoantigenic sperm protein 4</fullName>
    </recommendedName>
    <alternativeName>
        <fullName>fSP4</fullName>
    </alternativeName>
</protein>
<comment type="miscellaneous">
    <text evidence="1">On the 2D-gel the determined pI of this protein is: 5.5, its MW is: 16.4 kDa.</text>
</comment>
<reference evidence="4" key="1">
    <citation type="submission" date="2001-12" db="UniProtKB">
        <title>Partial characterisation of antigenic sperm proteins in foxes (Vulpes vulpes).</title>
        <authorList>
            <person name="Verdier Y."/>
            <person name="Rouet N."/>
            <person name="Artois M."/>
            <person name="Boue F."/>
        </authorList>
    </citation>
    <scope>PROTEIN SEQUENCE</scope>
    <source>
        <tissue evidence="2">Sperm</tissue>
    </source>
</reference>
<reference key="2">
    <citation type="journal article" date="2002" name="J. Androl.">
        <title>Partial characterization of antigenic sperm proteins in foxes (Vulpes vulpes).</title>
        <authorList>
            <person name="Verdier Y."/>
            <person name="Rouet N."/>
            <person name="Artois M."/>
            <person name="Boue F."/>
        </authorList>
    </citation>
    <scope>IDENTIFICATION BY 2D-PAGE</scope>
</reference>
<name>FSP4_VULVU</name>
<accession>P83199</accession>
<keyword id="KW-0903">Direct protein sequencing</keyword>
<keyword id="KW-1185">Reference proteome</keyword>